<proteinExistence type="inferred from homology"/>
<gene>
    <name evidence="1" type="primary">mnmC</name>
    <name type="ordered locus">Pcryo_1977</name>
</gene>
<feature type="chain" id="PRO_0000348015" description="tRNA 5-methylaminomethyl-2-thiouridine biosynthesis bifunctional protein MnmC">
    <location>
        <begin position="1"/>
        <end position="697"/>
    </location>
</feature>
<feature type="region of interest" description="tRNA (mnm(5)s(2)U34)-methyltransferase">
    <location>
        <begin position="1"/>
        <end position="272"/>
    </location>
</feature>
<feature type="region of interest" description="FAD-dependent cmnm(5)s(2)U34 oxidoreductase">
    <location>
        <begin position="300"/>
        <end position="697"/>
    </location>
</feature>
<sequence length="697" mass="76652">MPKPASMAMNTTKSTTPAHVISPANIEWQTDDAGNEVPVSGEFGDAYFSQADGLAESHHVFLAHNQLPTRLANLIPKQCFTIYELGFGTGLNLLATWQLWRQLRLTHPHLASARLHFITTEKHPVPFSDLAKILAPLGQRTPELALLIEQLLTSYPPLIAGCHRLDFIDDNLTLDIWLGDANDSLASLDSTVATQRPYINAWFLDGFAPSCNEILWTERIFSHMQRLSRAGTTAATYSCAGIIKRGLQSQGFVIKKSKVLGSKREMLTAVMSEMSSLDKPISTLSNKVTLSNYPNNAVVIGAGVAGLLTAWSLANRGISVTVLDKDAPLAGASGNPRALLAPNMTPIHHVYEHLHSIGYLYSGRLYRYFNQQAAIQKSPLILEQTGTLDLLVKTNIGTEQILDYPDTMATTISPEKAQDISGLKDKDLAHNLYMPQAGLVNPQALQTVILAHPNITYQQLNIINIKETENSIILTGSKEDENASQASLTITADHVVICAAYESHQLDKRIVKCRTIRGQLSWFTPTAQQLTQLPKLPLKYSGYCAPFIGQSGDAELNHISENQPQFLLGASFIDGDTNIDVRDEENQQNYDKLIEDMPELSSVLPNDISTWHARAGIRTQTMDYHPLVGLLAQSQRLWSMSAMGAKGYAIAPICAEALADMMLGCFTPLSAAMLARLSPNRARLHKVHKHKTRQAVI</sequence>
<comment type="function">
    <text evidence="1">Catalyzes the last two steps in the biosynthesis of 5-methylaminomethyl-2-thiouridine (mnm(5)s(2)U) at the wobble position (U34) in tRNA. Catalyzes the FAD-dependent demodification of cmnm(5)s(2)U34 to nm(5)s(2)U34, followed by the transfer of a methyl group from S-adenosyl-L-methionine to nm(5)s(2)U34, to form mnm(5)s(2)U34.</text>
</comment>
<comment type="catalytic activity">
    <reaction evidence="1">
        <text>5-aminomethyl-2-thiouridine(34) in tRNA + S-adenosyl-L-methionine = 5-methylaminomethyl-2-thiouridine(34) in tRNA + S-adenosyl-L-homocysteine + H(+)</text>
        <dbReference type="Rhea" id="RHEA:19569"/>
        <dbReference type="Rhea" id="RHEA-COMP:10195"/>
        <dbReference type="Rhea" id="RHEA-COMP:10197"/>
        <dbReference type="ChEBI" id="CHEBI:15378"/>
        <dbReference type="ChEBI" id="CHEBI:57856"/>
        <dbReference type="ChEBI" id="CHEBI:59789"/>
        <dbReference type="ChEBI" id="CHEBI:74454"/>
        <dbReference type="ChEBI" id="CHEBI:74455"/>
        <dbReference type="EC" id="2.1.1.61"/>
    </reaction>
</comment>
<comment type="cofactor">
    <cofactor evidence="1">
        <name>FAD</name>
        <dbReference type="ChEBI" id="CHEBI:57692"/>
    </cofactor>
</comment>
<comment type="subcellular location">
    <subcellularLocation>
        <location evidence="1">Cytoplasm</location>
    </subcellularLocation>
</comment>
<comment type="similarity">
    <text evidence="1">In the N-terminal section; belongs to the methyltransferase superfamily. tRNA (mnm(5)s(2)U34)-methyltransferase family.</text>
</comment>
<comment type="similarity">
    <text evidence="1">In the C-terminal section; belongs to the DAO family.</text>
</comment>
<accession>Q1Q999</accession>
<dbReference type="EC" id="2.1.1.61" evidence="1"/>
<dbReference type="EC" id="1.5.-.-" evidence="1"/>
<dbReference type="EMBL" id="CP000323">
    <property type="protein sequence ID" value="ABE75754.1"/>
    <property type="molecule type" value="Genomic_DNA"/>
</dbReference>
<dbReference type="RefSeq" id="WP_011514297.1">
    <property type="nucleotide sequence ID" value="NC_007969.1"/>
</dbReference>
<dbReference type="SMR" id="Q1Q999"/>
<dbReference type="STRING" id="335284.Pcryo_1977"/>
<dbReference type="KEGG" id="pcr:Pcryo_1977"/>
<dbReference type="eggNOG" id="COG0665">
    <property type="taxonomic scope" value="Bacteria"/>
</dbReference>
<dbReference type="eggNOG" id="COG4121">
    <property type="taxonomic scope" value="Bacteria"/>
</dbReference>
<dbReference type="HOGENOM" id="CLU_022427_2_0_6"/>
<dbReference type="Proteomes" id="UP000002425">
    <property type="component" value="Chromosome"/>
</dbReference>
<dbReference type="GO" id="GO:0005737">
    <property type="term" value="C:cytoplasm"/>
    <property type="evidence" value="ECO:0007669"/>
    <property type="project" value="UniProtKB-SubCell"/>
</dbReference>
<dbReference type="GO" id="GO:0050660">
    <property type="term" value="F:flavin adenine dinucleotide binding"/>
    <property type="evidence" value="ECO:0007669"/>
    <property type="project" value="UniProtKB-UniRule"/>
</dbReference>
<dbReference type="GO" id="GO:0016645">
    <property type="term" value="F:oxidoreductase activity, acting on the CH-NH group of donors"/>
    <property type="evidence" value="ECO:0007669"/>
    <property type="project" value="InterPro"/>
</dbReference>
<dbReference type="GO" id="GO:0004808">
    <property type="term" value="F:tRNA (5-methylaminomethyl-2-thiouridylate)(34)-methyltransferase activity"/>
    <property type="evidence" value="ECO:0007669"/>
    <property type="project" value="UniProtKB-EC"/>
</dbReference>
<dbReference type="GO" id="GO:0032259">
    <property type="term" value="P:methylation"/>
    <property type="evidence" value="ECO:0007669"/>
    <property type="project" value="UniProtKB-KW"/>
</dbReference>
<dbReference type="GO" id="GO:0002097">
    <property type="term" value="P:tRNA wobble base modification"/>
    <property type="evidence" value="ECO:0007669"/>
    <property type="project" value="UniProtKB-UniRule"/>
</dbReference>
<dbReference type="Gene3D" id="3.30.9.10">
    <property type="entry name" value="D-Amino Acid Oxidase, subunit A, domain 2"/>
    <property type="match status" value="1"/>
</dbReference>
<dbReference type="Gene3D" id="3.50.50.60">
    <property type="entry name" value="FAD/NAD(P)-binding domain"/>
    <property type="match status" value="1"/>
</dbReference>
<dbReference type="Gene3D" id="3.40.50.150">
    <property type="entry name" value="Vaccinia Virus protein VP39"/>
    <property type="match status" value="1"/>
</dbReference>
<dbReference type="HAMAP" id="MF_01102">
    <property type="entry name" value="MnmC"/>
    <property type="match status" value="1"/>
</dbReference>
<dbReference type="InterPro" id="IPR006076">
    <property type="entry name" value="FAD-dep_OxRdtase"/>
</dbReference>
<dbReference type="InterPro" id="IPR036188">
    <property type="entry name" value="FAD/NAD-bd_sf"/>
</dbReference>
<dbReference type="InterPro" id="IPR008471">
    <property type="entry name" value="MnmC-like_methylTransf"/>
</dbReference>
<dbReference type="InterPro" id="IPR029063">
    <property type="entry name" value="SAM-dependent_MTases_sf"/>
</dbReference>
<dbReference type="InterPro" id="IPR023032">
    <property type="entry name" value="tRNA_MAMT_biosynth_bifunc_MnmC"/>
</dbReference>
<dbReference type="InterPro" id="IPR047785">
    <property type="entry name" value="tRNA_MNMC2"/>
</dbReference>
<dbReference type="InterPro" id="IPR017610">
    <property type="entry name" value="tRNA_S-uridine_synth_MnmC_C"/>
</dbReference>
<dbReference type="NCBIfam" id="TIGR03197">
    <property type="entry name" value="MnmC_Cterm"/>
    <property type="match status" value="1"/>
</dbReference>
<dbReference type="NCBIfam" id="NF033855">
    <property type="entry name" value="tRNA_MNMC2"/>
    <property type="match status" value="1"/>
</dbReference>
<dbReference type="PANTHER" id="PTHR13847">
    <property type="entry name" value="SARCOSINE DEHYDROGENASE-RELATED"/>
    <property type="match status" value="1"/>
</dbReference>
<dbReference type="PANTHER" id="PTHR13847:SF283">
    <property type="entry name" value="TRNA 5-METHYLAMINOMETHYL-2-THIOURIDINE BIOSYNTHESIS BIFUNCTIONAL PROTEIN MNMC"/>
    <property type="match status" value="1"/>
</dbReference>
<dbReference type="Pfam" id="PF01266">
    <property type="entry name" value="DAO"/>
    <property type="match status" value="1"/>
</dbReference>
<dbReference type="Pfam" id="PF05430">
    <property type="entry name" value="Methyltransf_30"/>
    <property type="match status" value="1"/>
</dbReference>
<dbReference type="SUPFAM" id="SSF51971">
    <property type="entry name" value="Nucleotide-binding domain"/>
    <property type="match status" value="1"/>
</dbReference>
<reference key="1">
    <citation type="submission" date="2006-03" db="EMBL/GenBank/DDBJ databases">
        <title>Complete sequence of chromosome of Psychrobacter cryohalolentis K5.</title>
        <authorList>
            <consortium name="US DOE Joint Genome Institute"/>
            <person name="Copeland A."/>
            <person name="Lucas S."/>
            <person name="Lapidus A."/>
            <person name="Barry K."/>
            <person name="Detter J.C."/>
            <person name="Glavina T."/>
            <person name="Hammon N."/>
            <person name="Israni S."/>
            <person name="Dalin E."/>
            <person name="Tice H."/>
            <person name="Pitluck S."/>
            <person name="Brettin T."/>
            <person name="Bruce D."/>
            <person name="Han C."/>
            <person name="Tapia R."/>
            <person name="Sims D.R."/>
            <person name="Gilna P."/>
            <person name="Schmutz J."/>
            <person name="Larimer F."/>
            <person name="Land M."/>
            <person name="Hauser L."/>
            <person name="Kyrpides N."/>
            <person name="Kim E."/>
            <person name="Richardson P."/>
        </authorList>
    </citation>
    <scope>NUCLEOTIDE SEQUENCE [LARGE SCALE GENOMIC DNA]</scope>
    <source>
        <strain>ATCC BAA-1226 / DSM 17306 / VKM B-2378 / K5</strain>
    </source>
</reference>
<protein>
    <recommendedName>
        <fullName evidence="1">tRNA 5-methylaminomethyl-2-thiouridine biosynthesis bifunctional protein MnmC</fullName>
        <shortName evidence="1">tRNA mnm(5)s(2)U biosynthesis bifunctional protein</shortName>
    </recommendedName>
    <domain>
        <recommendedName>
            <fullName evidence="1">tRNA (mnm(5)s(2)U34)-methyltransferase</fullName>
            <ecNumber evidence="1">2.1.1.61</ecNumber>
        </recommendedName>
    </domain>
    <domain>
        <recommendedName>
            <fullName evidence="1">FAD-dependent cmnm(5)s(2)U34 oxidoreductase</fullName>
            <ecNumber evidence="1">1.5.-.-</ecNumber>
        </recommendedName>
    </domain>
</protein>
<keyword id="KW-0963">Cytoplasm</keyword>
<keyword id="KW-0274">FAD</keyword>
<keyword id="KW-0285">Flavoprotein</keyword>
<keyword id="KW-0489">Methyltransferase</keyword>
<keyword id="KW-0511">Multifunctional enzyme</keyword>
<keyword id="KW-0560">Oxidoreductase</keyword>
<keyword id="KW-0949">S-adenosyl-L-methionine</keyword>
<keyword id="KW-0808">Transferase</keyword>
<keyword id="KW-0819">tRNA processing</keyword>
<organism>
    <name type="scientific">Psychrobacter cryohalolentis (strain ATCC BAA-1226 / DSM 17306 / VKM B-2378 / K5)</name>
    <dbReference type="NCBI Taxonomy" id="335284"/>
    <lineage>
        <taxon>Bacteria</taxon>
        <taxon>Pseudomonadati</taxon>
        <taxon>Pseudomonadota</taxon>
        <taxon>Gammaproteobacteria</taxon>
        <taxon>Moraxellales</taxon>
        <taxon>Moraxellaceae</taxon>
        <taxon>Psychrobacter</taxon>
    </lineage>
</organism>
<name>MNMC_PSYCK</name>
<evidence type="ECO:0000255" key="1">
    <source>
        <dbReference type="HAMAP-Rule" id="MF_01102"/>
    </source>
</evidence>